<comment type="function">
    <text evidence="1">Single strand-specific metallo-endoribonuclease involved in late-stage 70S ribosome quality control and in maturation of the 3' terminus of the 16S rRNA.</text>
</comment>
<comment type="cofactor">
    <cofactor evidence="1">
        <name>Zn(2+)</name>
        <dbReference type="ChEBI" id="CHEBI:29105"/>
    </cofactor>
    <text evidence="1">Binds 1 zinc ion.</text>
</comment>
<comment type="subcellular location">
    <subcellularLocation>
        <location evidence="1">Cytoplasm</location>
    </subcellularLocation>
</comment>
<comment type="similarity">
    <text evidence="1">Belongs to the endoribonuclease YbeY family.</text>
</comment>
<name>YBEY_MYCSK</name>
<feature type="chain" id="PRO_0000284244" description="Endoribonuclease YbeY">
    <location>
        <begin position="1"/>
        <end position="177"/>
    </location>
</feature>
<feature type="binding site" evidence="1">
    <location>
        <position position="118"/>
    </location>
    <ligand>
        <name>Zn(2+)</name>
        <dbReference type="ChEBI" id="CHEBI:29105"/>
        <note>catalytic</note>
    </ligand>
</feature>
<feature type="binding site" evidence="1">
    <location>
        <position position="122"/>
    </location>
    <ligand>
        <name>Zn(2+)</name>
        <dbReference type="ChEBI" id="CHEBI:29105"/>
        <note>catalytic</note>
    </ligand>
</feature>
<feature type="binding site" evidence="1">
    <location>
        <position position="128"/>
    </location>
    <ligand>
        <name>Zn(2+)</name>
        <dbReference type="ChEBI" id="CHEBI:29105"/>
        <note>catalytic</note>
    </ligand>
</feature>
<protein>
    <recommendedName>
        <fullName evidence="1">Endoribonuclease YbeY</fullName>
        <ecNumber evidence="1">3.1.-.-</ecNumber>
    </recommendedName>
</protein>
<organism>
    <name type="scientific">Mycobacterium sp. (strain KMS)</name>
    <dbReference type="NCBI Taxonomy" id="189918"/>
    <lineage>
        <taxon>Bacteria</taxon>
        <taxon>Bacillati</taxon>
        <taxon>Actinomycetota</taxon>
        <taxon>Actinomycetes</taxon>
        <taxon>Mycobacteriales</taxon>
        <taxon>Mycobacteriaceae</taxon>
        <taxon>Mycobacterium</taxon>
    </lineage>
</organism>
<keyword id="KW-0963">Cytoplasm</keyword>
<keyword id="KW-0255">Endonuclease</keyword>
<keyword id="KW-0378">Hydrolase</keyword>
<keyword id="KW-0479">Metal-binding</keyword>
<keyword id="KW-0540">Nuclease</keyword>
<keyword id="KW-0690">Ribosome biogenesis</keyword>
<keyword id="KW-0698">rRNA processing</keyword>
<keyword id="KW-0862">Zinc</keyword>
<accession>A1UIQ4</accession>
<dbReference type="EC" id="3.1.-.-" evidence="1"/>
<dbReference type="EMBL" id="CP000518">
    <property type="protein sequence ID" value="ABL92712.1"/>
    <property type="molecule type" value="Genomic_DNA"/>
</dbReference>
<dbReference type="SMR" id="A1UIQ4"/>
<dbReference type="STRING" id="189918.Mkms_3518"/>
<dbReference type="KEGG" id="mkm:Mkms_3518"/>
<dbReference type="HOGENOM" id="CLU_106710_3_2_11"/>
<dbReference type="OrthoDB" id="9807740at2"/>
<dbReference type="GO" id="GO:0005737">
    <property type="term" value="C:cytoplasm"/>
    <property type="evidence" value="ECO:0007669"/>
    <property type="project" value="UniProtKB-SubCell"/>
</dbReference>
<dbReference type="GO" id="GO:0004222">
    <property type="term" value="F:metalloendopeptidase activity"/>
    <property type="evidence" value="ECO:0007669"/>
    <property type="project" value="InterPro"/>
</dbReference>
<dbReference type="GO" id="GO:0004521">
    <property type="term" value="F:RNA endonuclease activity"/>
    <property type="evidence" value="ECO:0007669"/>
    <property type="project" value="UniProtKB-UniRule"/>
</dbReference>
<dbReference type="GO" id="GO:0008270">
    <property type="term" value="F:zinc ion binding"/>
    <property type="evidence" value="ECO:0007669"/>
    <property type="project" value="UniProtKB-UniRule"/>
</dbReference>
<dbReference type="GO" id="GO:0006364">
    <property type="term" value="P:rRNA processing"/>
    <property type="evidence" value="ECO:0007669"/>
    <property type="project" value="UniProtKB-UniRule"/>
</dbReference>
<dbReference type="Gene3D" id="3.40.390.30">
    <property type="entry name" value="Metalloproteases ('zincins'), catalytic domain"/>
    <property type="match status" value="1"/>
</dbReference>
<dbReference type="HAMAP" id="MF_00009">
    <property type="entry name" value="Endoribonucl_YbeY"/>
    <property type="match status" value="1"/>
</dbReference>
<dbReference type="InterPro" id="IPR023091">
    <property type="entry name" value="MetalPrtase_cat_dom_sf_prd"/>
</dbReference>
<dbReference type="InterPro" id="IPR002036">
    <property type="entry name" value="YbeY"/>
</dbReference>
<dbReference type="InterPro" id="IPR020549">
    <property type="entry name" value="YbeY_CS"/>
</dbReference>
<dbReference type="NCBIfam" id="TIGR00043">
    <property type="entry name" value="rRNA maturation RNase YbeY"/>
    <property type="match status" value="1"/>
</dbReference>
<dbReference type="PANTHER" id="PTHR46986">
    <property type="entry name" value="ENDORIBONUCLEASE YBEY, CHLOROPLASTIC"/>
    <property type="match status" value="1"/>
</dbReference>
<dbReference type="PANTHER" id="PTHR46986:SF1">
    <property type="entry name" value="ENDORIBONUCLEASE YBEY, CHLOROPLASTIC"/>
    <property type="match status" value="1"/>
</dbReference>
<dbReference type="Pfam" id="PF02130">
    <property type="entry name" value="YbeY"/>
    <property type="match status" value="1"/>
</dbReference>
<dbReference type="SUPFAM" id="SSF55486">
    <property type="entry name" value="Metalloproteases ('zincins'), catalytic domain"/>
    <property type="match status" value="1"/>
</dbReference>
<dbReference type="PROSITE" id="PS01306">
    <property type="entry name" value="UPF0054"/>
    <property type="match status" value="1"/>
</dbReference>
<evidence type="ECO:0000255" key="1">
    <source>
        <dbReference type="HAMAP-Rule" id="MF_00009"/>
    </source>
</evidence>
<reference key="1">
    <citation type="submission" date="2006-12" db="EMBL/GenBank/DDBJ databases">
        <title>Complete sequence of chromosome of Mycobacterium sp. KMS.</title>
        <authorList>
            <consortium name="US DOE Joint Genome Institute"/>
            <person name="Copeland A."/>
            <person name="Lucas S."/>
            <person name="Lapidus A."/>
            <person name="Barry K."/>
            <person name="Detter J.C."/>
            <person name="Glavina del Rio T."/>
            <person name="Hammon N."/>
            <person name="Israni S."/>
            <person name="Dalin E."/>
            <person name="Tice H."/>
            <person name="Pitluck S."/>
            <person name="Kiss H."/>
            <person name="Brettin T."/>
            <person name="Bruce D."/>
            <person name="Han C."/>
            <person name="Tapia R."/>
            <person name="Gilna P."/>
            <person name="Schmutz J."/>
            <person name="Larimer F."/>
            <person name="Land M."/>
            <person name="Hauser L."/>
            <person name="Kyrpides N."/>
            <person name="Mikhailova N."/>
            <person name="Miller C.D."/>
            <person name="Richardson P."/>
        </authorList>
    </citation>
    <scope>NUCLEOTIDE SEQUENCE [LARGE SCALE GENOMIC DNA]</scope>
    <source>
        <strain>KMS</strain>
    </source>
</reference>
<sequence>MSIEVSNESGIDVSEEELISVARFVIEKMNVNPAAELSMVLLDTSSMADLHMRWMDLPGPTDVMSFPMDELEPGGRPDAPEPGPAMLGDIVLCPEFAAKQAETAGHSLGHELALLTVHGVLHLLGYDHAEPDEEKEMFALQRELLEEWVAHQVEAYHLDRQTERDRRLLDKSRYFDE</sequence>
<gene>
    <name evidence="1" type="primary">ybeY</name>
    <name type="ordered locus">Mkms_3518</name>
</gene>
<proteinExistence type="inferred from homology"/>